<organism>
    <name type="scientific">Chaetomium globosum (strain ATCC 6205 / CBS 148.51 / DSM 1962 / NBRC 6347 / NRRL 1970)</name>
    <name type="common">Soil fungus</name>
    <dbReference type="NCBI Taxonomy" id="306901"/>
    <lineage>
        <taxon>Eukaryota</taxon>
        <taxon>Fungi</taxon>
        <taxon>Dikarya</taxon>
        <taxon>Ascomycota</taxon>
        <taxon>Pezizomycotina</taxon>
        <taxon>Sordariomycetes</taxon>
        <taxon>Sordariomycetidae</taxon>
        <taxon>Sordariales</taxon>
        <taxon>Chaetomiaceae</taxon>
        <taxon>Chaetomium</taxon>
    </lineage>
</organism>
<keyword id="KW-0963">Cytoplasm</keyword>
<keyword id="KW-0396">Initiation factor</keyword>
<keyword id="KW-0648">Protein biosynthesis</keyword>
<keyword id="KW-1185">Reference proteome</keyword>
<keyword id="KW-0677">Repeat</keyword>
<keyword id="KW-0694">RNA-binding</keyword>
<keyword id="KW-0853">WD repeat</keyword>
<gene>
    <name evidence="1" type="primary">PRT1</name>
    <name type="ORF">CHGG_10951</name>
</gene>
<evidence type="ECO:0000255" key="1">
    <source>
        <dbReference type="HAMAP-Rule" id="MF_03001"/>
    </source>
</evidence>
<sequence>MAPSFDHLRDEDLDEEDFDMDEVDISDLREKYEVQLEQGYDTFVVVDGLPEVNADQKPKLVKFLLKKLNSVGRVSEDSVYMPMGDNGLSLRFAFVEYSSPAEAAAAVRQLDFTPLDKKHTLRVNKMTDVDRYGREGRIEEEYTAPKIEEFQEKEHLRSFMADPSERGRDQFVMFRGETVGVFWNNEKDQPENIVDRQQWTETFVQWSPQGTYLTSVHAQGVLLWGGASWARLRRFPHPFVNLVAFSPNEKYMVTWSNRPISIPDSGHPALSLDDDGKNYVIWDLETSKPLRSFAQQDTPATGDDAAKKSAKFPWPAFKWSADDKYVARLNQGTSISVYELPKMNLMDKTAIKIEGVMDFEWAPATPRRDGVKTYEQLFCFWTPEIGSNPARVGLMSIPSKQIVRSLNLFSVSDVKLHWQSDSAYICVKVDRHSKSKKSQATTLEIFRVKEKGVPVEVVDTIKDTVINFAWEPKGDRFVIITTPEPVGAVAVAPKTSVAFFCPEKAKGNAIGNFKHLRTLDKKNSNAIYWSPKGRFVVVAAIANTQSSDLDFFDVDFEGEKPEGEKDLTANLQLMNTSEHYGMTDIEWDPSGRYVATWASSWKHVMENGYHLYDFRGELLREEAIEKFKQWSWRPRPATLLTKEEQKQIRKNLREYSRVFEQEDADRISSADVAVVEARRRLLLEWVTWRESMEEELVEDRAALGLPEDPVAELLRQKTAAITPAAGEEQEEQVVEEIMEEVLEESEEIVN</sequence>
<dbReference type="EMBL" id="CH408036">
    <property type="protein sequence ID" value="EAQ83133.1"/>
    <property type="molecule type" value="Genomic_DNA"/>
</dbReference>
<dbReference type="RefSeq" id="XP_001226218.1">
    <property type="nucleotide sequence ID" value="XM_001226217.1"/>
</dbReference>
<dbReference type="SMR" id="Q2GM53"/>
<dbReference type="FunCoup" id="Q2GM53">
    <property type="interactions" value="1187"/>
</dbReference>
<dbReference type="STRING" id="306901.Q2GM53"/>
<dbReference type="GeneID" id="4397283"/>
<dbReference type="VEuPathDB" id="FungiDB:CHGG_10951"/>
<dbReference type="eggNOG" id="KOG2314">
    <property type="taxonomic scope" value="Eukaryota"/>
</dbReference>
<dbReference type="HOGENOM" id="CLU_011152_4_0_1"/>
<dbReference type="InParanoid" id="Q2GM53"/>
<dbReference type="OMA" id="LWGGPQF"/>
<dbReference type="OrthoDB" id="10250414at2759"/>
<dbReference type="Proteomes" id="UP000001056">
    <property type="component" value="Unassembled WGS sequence"/>
</dbReference>
<dbReference type="GO" id="GO:0010494">
    <property type="term" value="C:cytoplasmic stress granule"/>
    <property type="evidence" value="ECO:0007669"/>
    <property type="project" value="EnsemblFungi"/>
</dbReference>
<dbReference type="GO" id="GO:0016282">
    <property type="term" value="C:eukaryotic 43S preinitiation complex"/>
    <property type="evidence" value="ECO:0007669"/>
    <property type="project" value="UniProtKB-UniRule"/>
</dbReference>
<dbReference type="GO" id="GO:0033290">
    <property type="term" value="C:eukaryotic 48S preinitiation complex"/>
    <property type="evidence" value="ECO:0007669"/>
    <property type="project" value="UniProtKB-UniRule"/>
</dbReference>
<dbReference type="GO" id="GO:0071540">
    <property type="term" value="C:eukaryotic translation initiation factor 3 complex, eIF3e"/>
    <property type="evidence" value="ECO:0007669"/>
    <property type="project" value="EnsemblFungi"/>
</dbReference>
<dbReference type="GO" id="GO:0071541">
    <property type="term" value="C:eukaryotic translation initiation factor 3 complex, eIF3m"/>
    <property type="evidence" value="ECO:0007669"/>
    <property type="project" value="EnsemblFungi"/>
</dbReference>
<dbReference type="GO" id="GO:0043614">
    <property type="term" value="C:multi-eIF complex"/>
    <property type="evidence" value="ECO:0007669"/>
    <property type="project" value="EnsemblFungi"/>
</dbReference>
<dbReference type="GO" id="GO:0042802">
    <property type="term" value="F:identical protein binding"/>
    <property type="evidence" value="ECO:0007669"/>
    <property type="project" value="EnsemblFungi"/>
</dbReference>
<dbReference type="GO" id="GO:0003723">
    <property type="term" value="F:RNA binding"/>
    <property type="evidence" value="ECO:0007669"/>
    <property type="project" value="UniProtKB-UniRule"/>
</dbReference>
<dbReference type="GO" id="GO:0003743">
    <property type="term" value="F:translation initiation factor activity"/>
    <property type="evidence" value="ECO:0007669"/>
    <property type="project" value="UniProtKB-UniRule"/>
</dbReference>
<dbReference type="GO" id="GO:0031369">
    <property type="term" value="F:translation initiation factor binding"/>
    <property type="evidence" value="ECO:0007669"/>
    <property type="project" value="InterPro"/>
</dbReference>
<dbReference type="GO" id="GO:0001732">
    <property type="term" value="P:formation of cytoplasmic translation initiation complex"/>
    <property type="evidence" value="ECO:0007669"/>
    <property type="project" value="UniProtKB-UniRule"/>
</dbReference>
<dbReference type="CDD" id="cd12278">
    <property type="entry name" value="RRM_eIF3B"/>
    <property type="match status" value="1"/>
</dbReference>
<dbReference type="FunFam" id="2.130.10.10:FF:000419">
    <property type="entry name" value="Eukaryotic translation initiation factor 3 subunit B"/>
    <property type="match status" value="1"/>
</dbReference>
<dbReference type="FunFam" id="3.30.70.330:FF:000235">
    <property type="entry name" value="Eukaryotic translation initiation factor 3 subunit B"/>
    <property type="match status" value="1"/>
</dbReference>
<dbReference type="Gene3D" id="3.30.70.330">
    <property type="match status" value="1"/>
</dbReference>
<dbReference type="Gene3D" id="2.130.10.10">
    <property type="entry name" value="YVTN repeat-like/Quinoprotein amine dehydrogenase"/>
    <property type="match status" value="1"/>
</dbReference>
<dbReference type="HAMAP" id="MF_03001">
    <property type="entry name" value="eIF3b"/>
    <property type="match status" value="1"/>
</dbReference>
<dbReference type="InterPro" id="IPR011400">
    <property type="entry name" value="EIF3B"/>
</dbReference>
<dbReference type="InterPro" id="IPR034363">
    <property type="entry name" value="eIF3B_RRM"/>
</dbReference>
<dbReference type="InterPro" id="IPR012677">
    <property type="entry name" value="Nucleotide-bd_a/b_plait_sf"/>
</dbReference>
<dbReference type="InterPro" id="IPR035979">
    <property type="entry name" value="RBD_domain_sf"/>
</dbReference>
<dbReference type="InterPro" id="IPR000504">
    <property type="entry name" value="RRM_dom"/>
</dbReference>
<dbReference type="InterPro" id="IPR013979">
    <property type="entry name" value="TIF_beta_prop-like"/>
</dbReference>
<dbReference type="InterPro" id="IPR015943">
    <property type="entry name" value="WD40/YVTN_repeat-like_dom_sf"/>
</dbReference>
<dbReference type="PANTHER" id="PTHR14068">
    <property type="entry name" value="EUKARYOTIC TRANSLATION INITIATION FACTOR 3 EIF3 -RELATED"/>
    <property type="match status" value="1"/>
</dbReference>
<dbReference type="PANTHER" id="PTHR14068:SF0">
    <property type="entry name" value="EUKARYOTIC TRANSLATION INITIATION FACTOR 3 SUBUNIT B"/>
    <property type="match status" value="1"/>
</dbReference>
<dbReference type="Pfam" id="PF08662">
    <property type="entry name" value="eIF2A"/>
    <property type="match status" value="1"/>
</dbReference>
<dbReference type="PIRSF" id="PIRSF036424">
    <property type="entry name" value="eIF3b"/>
    <property type="match status" value="1"/>
</dbReference>
<dbReference type="SUPFAM" id="SSF82171">
    <property type="entry name" value="DPP6 N-terminal domain-like"/>
    <property type="match status" value="1"/>
</dbReference>
<dbReference type="SUPFAM" id="SSF54928">
    <property type="entry name" value="RNA-binding domain, RBD"/>
    <property type="match status" value="1"/>
</dbReference>
<dbReference type="PROSITE" id="PS50102">
    <property type="entry name" value="RRM"/>
    <property type="match status" value="1"/>
</dbReference>
<reference key="1">
    <citation type="journal article" date="2015" name="Genome Announc.">
        <title>Draft genome sequence of the cellulolytic fungus Chaetomium globosum.</title>
        <authorList>
            <person name="Cuomo C.A."/>
            <person name="Untereiner W.A."/>
            <person name="Ma L.-J."/>
            <person name="Grabherr M."/>
            <person name="Birren B.W."/>
        </authorList>
    </citation>
    <scope>NUCLEOTIDE SEQUENCE [LARGE SCALE GENOMIC DNA]</scope>
    <source>
        <strain>ATCC 6205 / CBS 148.51 / DSM 1962 / NBRC 6347 / NRRL 1970</strain>
    </source>
</reference>
<feature type="chain" id="PRO_0000363815" description="Eukaryotic translation initiation factor 3 subunit B">
    <location>
        <begin position="1"/>
        <end position="750"/>
    </location>
</feature>
<feature type="domain" description="RRM" evidence="1">
    <location>
        <begin position="42"/>
        <end position="128"/>
    </location>
</feature>
<feature type="repeat" description="WD 1">
    <location>
        <begin position="195"/>
        <end position="234"/>
    </location>
</feature>
<feature type="repeat" description="WD 2">
    <location>
        <begin position="236"/>
        <end position="292"/>
    </location>
</feature>
<feature type="repeat" description="WD 3">
    <location>
        <begin position="309"/>
        <end position="348"/>
    </location>
</feature>
<feature type="repeat" description="WD 4">
    <location>
        <begin position="519"/>
        <end position="562"/>
    </location>
</feature>
<protein>
    <recommendedName>
        <fullName evidence="1">Eukaryotic translation initiation factor 3 subunit B</fullName>
        <shortName evidence="1">eIF3b</shortName>
    </recommendedName>
    <alternativeName>
        <fullName evidence="1">Eukaryotic translation initiation factor 3 90 kDa subunit homolog</fullName>
        <shortName evidence="1">eIF3 p90</shortName>
    </alternativeName>
    <alternativeName>
        <fullName>Translation initiation factor eIF3 p90 subunit homolog</fullName>
    </alternativeName>
</protein>
<proteinExistence type="inferred from homology"/>
<comment type="function">
    <text evidence="1">RNA-binding component of the eukaryotic translation initiation factor 3 (eIF-3) complex, which is involved in protein synthesis of a specialized repertoire of mRNAs and, together with other initiation factors, stimulates binding of mRNA and methionyl-tRNAi to the 40S ribosome. The eIF-3 complex specifically targets and initiates translation of a subset of mRNAs involved in cell proliferation.</text>
</comment>
<comment type="subunit">
    <text evidence="1">Component of the eukaryotic translation initiation factor 3 (eIF-3) complex.</text>
</comment>
<comment type="subcellular location">
    <subcellularLocation>
        <location evidence="1">Cytoplasm</location>
    </subcellularLocation>
</comment>
<comment type="similarity">
    <text evidence="1">Belongs to the eIF-3 subunit B family.</text>
</comment>
<name>EIF3B_CHAGB</name>
<accession>Q2GM53</accession>